<reference key="1">
    <citation type="journal article" date="2006" name="Genome Biol.">
        <title>The genome of Rhizobium leguminosarum has recognizable core and accessory components.</title>
        <authorList>
            <person name="Young J.P.W."/>
            <person name="Crossman L.C."/>
            <person name="Johnston A.W.B."/>
            <person name="Thomson N.R."/>
            <person name="Ghazoui Z.F."/>
            <person name="Hull K.H."/>
            <person name="Wexler M."/>
            <person name="Curson A.R.J."/>
            <person name="Todd J.D."/>
            <person name="Poole P.S."/>
            <person name="Mauchline T.H."/>
            <person name="East A.K."/>
            <person name="Quail M.A."/>
            <person name="Churcher C."/>
            <person name="Arrowsmith C."/>
            <person name="Cherevach I."/>
            <person name="Chillingworth T."/>
            <person name="Clarke K."/>
            <person name="Cronin A."/>
            <person name="Davis P."/>
            <person name="Fraser A."/>
            <person name="Hance Z."/>
            <person name="Hauser H."/>
            <person name="Jagels K."/>
            <person name="Moule S."/>
            <person name="Mungall K."/>
            <person name="Norbertczak H."/>
            <person name="Rabbinowitsch E."/>
            <person name="Sanders M."/>
            <person name="Simmonds M."/>
            <person name="Whitehead S."/>
            <person name="Parkhill J."/>
        </authorList>
    </citation>
    <scope>NUCLEOTIDE SEQUENCE [LARGE SCALE GENOMIC DNA]</scope>
    <source>
        <strain>DSM 114642 / LMG 32736 / 3841</strain>
    </source>
</reference>
<proteinExistence type="inferred from homology"/>
<name>ILVC_RHIJ3</name>
<gene>
    <name evidence="1" type="primary">ilvC</name>
    <name type="ordered locus">RL3205</name>
</gene>
<organism>
    <name type="scientific">Rhizobium johnstonii (strain DSM 114642 / LMG 32736 / 3841)</name>
    <name type="common">Rhizobium leguminosarum bv. viciae</name>
    <dbReference type="NCBI Taxonomy" id="216596"/>
    <lineage>
        <taxon>Bacteria</taxon>
        <taxon>Pseudomonadati</taxon>
        <taxon>Pseudomonadota</taxon>
        <taxon>Alphaproteobacteria</taxon>
        <taxon>Hyphomicrobiales</taxon>
        <taxon>Rhizobiaceae</taxon>
        <taxon>Rhizobium/Agrobacterium group</taxon>
        <taxon>Rhizobium</taxon>
        <taxon>Rhizobium johnstonii</taxon>
    </lineage>
</organism>
<sequence>MRVYYDRDADLNLIKAKKVAVIGYGSQGRAHALNLKDSGAQNVVIALKAGSPTVKKAEADGFKVMTVAEAAAWADLMMMATPDELQADIYKADIAGNIRDGAAIAFAHGLNVHFGLIEPKASVDVVMIAPKGPGHTVRGEYQKGGGVPCLVAVHQNASGNALELALSYACGVGGGRSGIIETNFREECETDLFGEQVVLCGGLVELIRAGFETLTEAGYAPEMAYFECLHEVKLIVDLIYEGGIANMNYSISNTAEWGEYVSGPRIITAETKAEMKRVLKDIQTGKFTSDWMQEYRAGGSRFKGIRRLNDSHPIEEVGAKLRGMMPWIGKNKLVDKSVN</sequence>
<comment type="function">
    <text evidence="1">Involved in the biosynthesis of branched-chain amino acids (BCAA). Catalyzes an alkyl-migration followed by a ketol-acid reduction of (S)-2-acetolactate (S2AL) to yield (R)-2,3-dihydroxy-isovalerate. In the isomerase reaction, S2AL is rearranged via a Mg-dependent methyl migration to produce 3-hydroxy-3-methyl-2-ketobutyrate (HMKB). In the reductase reaction, this 2-ketoacid undergoes a metal-dependent reduction by NADPH to yield (R)-2,3-dihydroxy-isovalerate.</text>
</comment>
<comment type="catalytic activity">
    <reaction evidence="1">
        <text>(2R)-2,3-dihydroxy-3-methylbutanoate + NADP(+) = (2S)-2-acetolactate + NADPH + H(+)</text>
        <dbReference type="Rhea" id="RHEA:22068"/>
        <dbReference type="ChEBI" id="CHEBI:15378"/>
        <dbReference type="ChEBI" id="CHEBI:49072"/>
        <dbReference type="ChEBI" id="CHEBI:57783"/>
        <dbReference type="ChEBI" id="CHEBI:58349"/>
        <dbReference type="ChEBI" id="CHEBI:58476"/>
        <dbReference type="EC" id="1.1.1.86"/>
    </reaction>
</comment>
<comment type="catalytic activity">
    <reaction evidence="1">
        <text>(2R,3R)-2,3-dihydroxy-3-methylpentanoate + NADP(+) = (S)-2-ethyl-2-hydroxy-3-oxobutanoate + NADPH + H(+)</text>
        <dbReference type="Rhea" id="RHEA:13493"/>
        <dbReference type="ChEBI" id="CHEBI:15378"/>
        <dbReference type="ChEBI" id="CHEBI:49256"/>
        <dbReference type="ChEBI" id="CHEBI:49258"/>
        <dbReference type="ChEBI" id="CHEBI:57783"/>
        <dbReference type="ChEBI" id="CHEBI:58349"/>
        <dbReference type="EC" id="1.1.1.86"/>
    </reaction>
</comment>
<comment type="cofactor">
    <cofactor evidence="1">
        <name>Mg(2+)</name>
        <dbReference type="ChEBI" id="CHEBI:18420"/>
    </cofactor>
    <text evidence="1">Binds 2 magnesium ions per subunit.</text>
</comment>
<comment type="pathway">
    <text evidence="1">Amino-acid biosynthesis; L-isoleucine biosynthesis; L-isoleucine from 2-oxobutanoate: step 2/4.</text>
</comment>
<comment type="pathway">
    <text evidence="1">Amino-acid biosynthesis; L-valine biosynthesis; L-valine from pyruvate: step 2/4.</text>
</comment>
<comment type="similarity">
    <text evidence="1">Belongs to the ketol-acid reductoisomerase family.</text>
</comment>
<feature type="chain" id="PRO_0000252777" description="Ketol-acid reductoisomerase (NADP(+))">
    <location>
        <begin position="1"/>
        <end position="339"/>
    </location>
</feature>
<feature type="domain" description="KARI N-terminal Rossmann" evidence="2">
    <location>
        <begin position="1"/>
        <end position="182"/>
    </location>
</feature>
<feature type="domain" description="KARI C-terminal knotted" evidence="3">
    <location>
        <begin position="183"/>
        <end position="328"/>
    </location>
</feature>
<feature type="active site" evidence="1">
    <location>
        <position position="108"/>
    </location>
</feature>
<feature type="binding site" evidence="1">
    <location>
        <begin position="24"/>
        <end position="27"/>
    </location>
    <ligand>
        <name>NADP(+)</name>
        <dbReference type="ChEBI" id="CHEBI:58349"/>
    </ligand>
</feature>
<feature type="binding site" evidence="1">
    <location>
        <position position="48"/>
    </location>
    <ligand>
        <name>NADP(+)</name>
        <dbReference type="ChEBI" id="CHEBI:58349"/>
    </ligand>
</feature>
<feature type="binding site" evidence="1">
    <location>
        <position position="51"/>
    </location>
    <ligand>
        <name>NADP(+)</name>
        <dbReference type="ChEBI" id="CHEBI:58349"/>
    </ligand>
</feature>
<feature type="binding site" evidence="1">
    <location>
        <position position="53"/>
    </location>
    <ligand>
        <name>NADP(+)</name>
        <dbReference type="ChEBI" id="CHEBI:58349"/>
    </ligand>
</feature>
<feature type="binding site" evidence="1">
    <location>
        <begin position="83"/>
        <end position="86"/>
    </location>
    <ligand>
        <name>NADP(+)</name>
        <dbReference type="ChEBI" id="CHEBI:58349"/>
    </ligand>
</feature>
<feature type="binding site" evidence="1">
    <location>
        <position position="134"/>
    </location>
    <ligand>
        <name>NADP(+)</name>
        <dbReference type="ChEBI" id="CHEBI:58349"/>
    </ligand>
</feature>
<feature type="binding site" evidence="1">
    <location>
        <position position="191"/>
    </location>
    <ligand>
        <name>Mg(2+)</name>
        <dbReference type="ChEBI" id="CHEBI:18420"/>
        <label>1</label>
    </ligand>
</feature>
<feature type="binding site" evidence="1">
    <location>
        <position position="191"/>
    </location>
    <ligand>
        <name>Mg(2+)</name>
        <dbReference type="ChEBI" id="CHEBI:18420"/>
        <label>2</label>
    </ligand>
</feature>
<feature type="binding site" evidence="1">
    <location>
        <position position="195"/>
    </location>
    <ligand>
        <name>Mg(2+)</name>
        <dbReference type="ChEBI" id="CHEBI:18420"/>
        <label>1</label>
    </ligand>
</feature>
<feature type="binding site" evidence="1">
    <location>
        <position position="227"/>
    </location>
    <ligand>
        <name>Mg(2+)</name>
        <dbReference type="ChEBI" id="CHEBI:18420"/>
        <label>2</label>
    </ligand>
</feature>
<feature type="binding site" evidence="1">
    <location>
        <position position="231"/>
    </location>
    <ligand>
        <name>Mg(2+)</name>
        <dbReference type="ChEBI" id="CHEBI:18420"/>
        <label>2</label>
    </ligand>
</feature>
<feature type="binding site" evidence="1">
    <location>
        <position position="252"/>
    </location>
    <ligand>
        <name>substrate</name>
    </ligand>
</feature>
<protein>
    <recommendedName>
        <fullName evidence="1">Ketol-acid reductoisomerase (NADP(+))</fullName>
        <shortName evidence="1">KARI</shortName>
        <ecNumber evidence="1">1.1.1.86</ecNumber>
    </recommendedName>
    <alternativeName>
        <fullName evidence="1">Acetohydroxy-acid isomeroreductase</fullName>
        <shortName evidence="1">AHIR</shortName>
    </alternativeName>
    <alternativeName>
        <fullName evidence="1">Alpha-keto-beta-hydroxylacyl reductoisomerase</fullName>
    </alternativeName>
    <alternativeName>
        <fullName evidence="1">Ketol-acid reductoisomerase type 1</fullName>
    </alternativeName>
    <alternativeName>
        <fullName evidence="1">Ketol-acid reductoisomerase type I</fullName>
    </alternativeName>
</protein>
<evidence type="ECO:0000255" key="1">
    <source>
        <dbReference type="HAMAP-Rule" id="MF_00435"/>
    </source>
</evidence>
<evidence type="ECO:0000255" key="2">
    <source>
        <dbReference type="PROSITE-ProRule" id="PRU01197"/>
    </source>
</evidence>
<evidence type="ECO:0000255" key="3">
    <source>
        <dbReference type="PROSITE-ProRule" id="PRU01198"/>
    </source>
</evidence>
<dbReference type="EC" id="1.1.1.86" evidence="1"/>
<dbReference type="EMBL" id="AM236080">
    <property type="protein sequence ID" value="CAK08692.1"/>
    <property type="molecule type" value="Genomic_DNA"/>
</dbReference>
<dbReference type="RefSeq" id="WP_003560822.1">
    <property type="nucleotide sequence ID" value="NC_008380.1"/>
</dbReference>
<dbReference type="SMR" id="Q1MED4"/>
<dbReference type="EnsemblBacteria" id="CAK08692">
    <property type="protein sequence ID" value="CAK08692"/>
    <property type="gene ID" value="RL3205"/>
</dbReference>
<dbReference type="GeneID" id="67482812"/>
<dbReference type="KEGG" id="rle:RL3205"/>
<dbReference type="eggNOG" id="COG0059">
    <property type="taxonomic scope" value="Bacteria"/>
</dbReference>
<dbReference type="HOGENOM" id="CLU_033821_0_1_5"/>
<dbReference type="UniPathway" id="UPA00047">
    <property type="reaction ID" value="UER00056"/>
</dbReference>
<dbReference type="UniPathway" id="UPA00049">
    <property type="reaction ID" value="UER00060"/>
</dbReference>
<dbReference type="Proteomes" id="UP000006575">
    <property type="component" value="Chromosome"/>
</dbReference>
<dbReference type="GO" id="GO:0005829">
    <property type="term" value="C:cytosol"/>
    <property type="evidence" value="ECO:0007669"/>
    <property type="project" value="TreeGrafter"/>
</dbReference>
<dbReference type="GO" id="GO:0004455">
    <property type="term" value="F:ketol-acid reductoisomerase activity"/>
    <property type="evidence" value="ECO:0007669"/>
    <property type="project" value="UniProtKB-UniRule"/>
</dbReference>
<dbReference type="GO" id="GO:0000287">
    <property type="term" value="F:magnesium ion binding"/>
    <property type="evidence" value="ECO:0007669"/>
    <property type="project" value="UniProtKB-UniRule"/>
</dbReference>
<dbReference type="GO" id="GO:0050661">
    <property type="term" value="F:NADP binding"/>
    <property type="evidence" value="ECO:0007669"/>
    <property type="project" value="InterPro"/>
</dbReference>
<dbReference type="GO" id="GO:0009097">
    <property type="term" value="P:isoleucine biosynthetic process"/>
    <property type="evidence" value="ECO:0007669"/>
    <property type="project" value="UniProtKB-UniRule"/>
</dbReference>
<dbReference type="GO" id="GO:0009099">
    <property type="term" value="P:L-valine biosynthetic process"/>
    <property type="evidence" value="ECO:0007669"/>
    <property type="project" value="UniProtKB-UniRule"/>
</dbReference>
<dbReference type="FunFam" id="3.40.50.720:FF:000023">
    <property type="entry name" value="Ketol-acid reductoisomerase (NADP(+))"/>
    <property type="match status" value="1"/>
</dbReference>
<dbReference type="Gene3D" id="6.10.240.10">
    <property type="match status" value="1"/>
</dbReference>
<dbReference type="Gene3D" id="3.40.50.720">
    <property type="entry name" value="NAD(P)-binding Rossmann-like Domain"/>
    <property type="match status" value="1"/>
</dbReference>
<dbReference type="HAMAP" id="MF_00435">
    <property type="entry name" value="IlvC"/>
    <property type="match status" value="1"/>
</dbReference>
<dbReference type="InterPro" id="IPR008927">
    <property type="entry name" value="6-PGluconate_DH-like_C_sf"/>
</dbReference>
<dbReference type="InterPro" id="IPR013023">
    <property type="entry name" value="KARI"/>
</dbReference>
<dbReference type="InterPro" id="IPR000506">
    <property type="entry name" value="KARI_C"/>
</dbReference>
<dbReference type="InterPro" id="IPR013116">
    <property type="entry name" value="KARI_N"/>
</dbReference>
<dbReference type="InterPro" id="IPR014359">
    <property type="entry name" value="KARI_prok"/>
</dbReference>
<dbReference type="InterPro" id="IPR036291">
    <property type="entry name" value="NAD(P)-bd_dom_sf"/>
</dbReference>
<dbReference type="NCBIfam" id="TIGR00465">
    <property type="entry name" value="ilvC"/>
    <property type="match status" value="1"/>
</dbReference>
<dbReference type="NCBIfam" id="NF004017">
    <property type="entry name" value="PRK05479.1"/>
    <property type="match status" value="1"/>
</dbReference>
<dbReference type="NCBIfam" id="NF009940">
    <property type="entry name" value="PRK13403.1"/>
    <property type="match status" value="1"/>
</dbReference>
<dbReference type="PANTHER" id="PTHR21371">
    <property type="entry name" value="KETOL-ACID REDUCTOISOMERASE, MITOCHONDRIAL"/>
    <property type="match status" value="1"/>
</dbReference>
<dbReference type="PANTHER" id="PTHR21371:SF1">
    <property type="entry name" value="KETOL-ACID REDUCTOISOMERASE, MITOCHONDRIAL"/>
    <property type="match status" value="1"/>
</dbReference>
<dbReference type="Pfam" id="PF01450">
    <property type="entry name" value="KARI_C"/>
    <property type="match status" value="1"/>
</dbReference>
<dbReference type="Pfam" id="PF07991">
    <property type="entry name" value="KARI_N"/>
    <property type="match status" value="1"/>
</dbReference>
<dbReference type="PIRSF" id="PIRSF000116">
    <property type="entry name" value="IlvC_gammaproteo"/>
    <property type="match status" value="1"/>
</dbReference>
<dbReference type="SUPFAM" id="SSF48179">
    <property type="entry name" value="6-phosphogluconate dehydrogenase C-terminal domain-like"/>
    <property type="match status" value="1"/>
</dbReference>
<dbReference type="SUPFAM" id="SSF51735">
    <property type="entry name" value="NAD(P)-binding Rossmann-fold domains"/>
    <property type="match status" value="1"/>
</dbReference>
<dbReference type="PROSITE" id="PS51851">
    <property type="entry name" value="KARI_C"/>
    <property type="match status" value="1"/>
</dbReference>
<dbReference type="PROSITE" id="PS51850">
    <property type="entry name" value="KARI_N"/>
    <property type="match status" value="1"/>
</dbReference>
<keyword id="KW-0028">Amino-acid biosynthesis</keyword>
<keyword id="KW-0100">Branched-chain amino acid biosynthesis</keyword>
<keyword id="KW-0460">Magnesium</keyword>
<keyword id="KW-0479">Metal-binding</keyword>
<keyword id="KW-0521">NADP</keyword>
<keyword id="KW-0560">Oxidoreductase</keyword>
<accession>Q1MED4</accession>